<accession>Q45070</accession>
<accession>Q796G4</accession>
<gene>
    <name type="primary">xynC</name>
    <name type="synonym">ynfF</name>
    <name type="ordered locus">BSU18150</name>
</gene>
<feature type="signal peptide" evidence="1">
    <location>
        <begin position="1"/>
        <end position="32"/>
    </location>
</feature>
<feature type="chain" id="PRO_0000278646" description="Glucuronoxylanase XynC">
    <location>
        <begin position="33"/>
        <end position="422"/>
    </location>
</feature>
<feature type="active site" description="Proton donor" evidence="4">
    <location>
        <position position="171"/>
    </location>
</feature>
<feature type="active site" description="Nucleophile" evidence="4">
    <location>
        <position position="260"/>
    </location>
</feature>
<feature type="strand" evidence="6">
    <location>
        <begin position="36"/>
        <end position="46"/>
    </location>
</feature>
<feature type="strand" evidence="6">
    <location>
        <begin position="49"/>
        <end position="53"/>
    </location>
</feature>
<feature type="helix" evidence="6">
    <location>
        <begin position="56"/>
        <end position="59"/>
    </location>
</feature>
<feature type="helix" evidence="6">
    <location>
        <begin position="64"/>
        <end position="71"/>
    </location>
</feature>
<feature type="strand" evidence="6">
    <location>
        <begin position="82"/>
        <end position="87"/>
    </location>
</feature>
<feature type="helix" evidence="6">
    <location>
        <begin position="91"/>
        <end position="97"/>
    </location>
</feature>
<feature type="helix" evidence="6">
    <location>
        <begin position="98"/>
        <end position="106"/>
    </location>
</feature>
<feature type="strand" evidence="6">
    <location>
        <begin position="110"/>
        <end position="116"/>
    </location>
</feature>
<feature type="helix" evidence="6">
    <location>
        <begin position="120"/>
        <end position="122"/>
    </location>
</feature>
<feature type="strand" evidence="6">
    <location>
        <begin position="123"/>
        <end position="128"/>
    </location>
</feature>
<feature type="strand" evidence="6">
    <location>
        <begin position="131"/>
        <end position="137"/>
    </location>
</feature>
<feature type="helix" evidence="6">
    <location>
        <begin position="139"/>
        <end position="141"/>
    </location>
</feature>
<feature type="helix" evidence="6">
    <location>
        <begin position="142"/>
        <end position="158"/>
    </location>
</feature>
<feature type="strand" evidence="6">
    <location>
        <begin position="164"/>
        <end position="168"/>
    </location>
</feature>
<feature type="helix" evidence="6">
    <location>
        <begin position="183"/>
        <end position="192"/>
    </location>
</feature>
<feature type="helix" evidence="6">
    <location>
        <begin position="194"/>
        <end position="196"/>
    </location>
</feature>
<feature type="strand" evidence="6">
    <location>
        <begin position="198"/>
        <end position="208"/>
    </location>
</feature>
<feature type="helix" evidence="6">
    <location>
        <begin position="211"/>
        <end position="218"/>
    </location>
</feature>
<feature type="helix" evidence="6">
    <location>
        <begin position="221"/>
        <end position="225"/>
    </location>
</feature>
<feature type="strand" evidence="6">
    <location>
        <begin position="228"/>
        <end position="233"/>
    </location>
</feature>
<feature type="helix" evidence="6">
    <location>
        <begin position="239"/>
        <end position="241"/>
    </location>
</feature>
<feature type="helix" evidence="6">
    <location>
        <begin position="245"/>
        <end position="250"/>
    </location>
</feature>
<feature type="strand" evidence="6">
    <location>
        <begin position="255"/>
        <end position="261"/>
    </location>
</feature>
<feature type="helix" evidence="7">
    <location>
        <begin position="270"/>
        <end position="272"/>
    </location>
</feature>
<feature type="turn" evidence="6">
    <location>
        <begin position="274"/>
        <end position="277"/>
    </location>
</feature>
<feature type="helix" evidence="6">
    <location>
        <begin position="278"/>
        <end position="289"/>
    </location>
</feature>
<feature type="strand" evidence="6">
    <location>
        <begin position="294"/>
        <end position="303"/>
    </location>
</feature>
<feature type="strand" evidence="6">
    <location>
        <begin position="306"/>
        <end position="308"/>
    </location>
</feature>
<feature type="strand" evidence="6">
    <location>
        <begin position="312"/>
        <end position="314"/>
    </location>
</feature>
<feature type="helix" evidence="6">
    <location>
        <begin position="316"/>
        <end position="325"/>
    </location>
</feature>
<feature type="strand" evidence="6">
    <location>
        <begin position="333"/>
        <end position="337"/>
    </location>
</feature>
<feature type="strand" evidence="6">
    <location>
        <begin position="345"/>
        <end position="352"/>
    </location>
</feature>
<feature type="strand" evidence="6">
    <location>
        <begin position="355"/>
        <end position="362"/>
    </location>
</feature>
<feature type="strand" evidence="6">
    <location>
        <begin position="364"/>
        <end position="366"/>
    </location>
</feature>
<feature type="strand" evidence="6">
    <location>
        <begin position="368"/>
        <end position="376"/>
    </location>
</feature>
<feature type="strand" evidence="6">
    <location>
        <begin position="379"/>
        <end position="388"/>
    </location>
</feature>
<feature type="strand" evidence="6">
    <location>
        <begin position="391"/>
        <end position="395"/>
    </location>
</feature>
<feature type="strand" evidence="6">
    <location>
        <begin position="405"/>
        <end position="410"/>
    </location>
</feature>
<feature type="strand" evidence="6">
    <location>
        <begin position="412"/>
        <end position="422"/>
    </location>
</feature>
<protein>
    <recommendedName>
        <fullName>Glucuronoxylanase XynC</fullName>
        <ecNumber>3.2.1.136</ecNumber>
    </recommendedName>
    <alternativeName>
        <fullName>Endoxylanase XynC</fullName>
    </alternativeName>
    <alternativeName>
        <fullName>Glucuronoxylan xylanohydrolase</fullName>
    </alternativeName>
</protein>
<sequence>MIPRIKKTICVLLVCFTMLSVMLGPGATEVLAASDVTVNVSAEKQVIRGFGGMNHPAWAGDLTAAQRETAFGNGQNQLGFSILRIHVDENRNNWYKEVETAKSAVKHGAIVFASPWNPPSDMVETFNRNGDTSAKRLKYNKYAAYAQHLNDFVTFMKNNGVNLYAISVQNEPDYAHEWTWWTPQEILRFMRENAGSINARVIAPESFQYLKNLSDPILNDPQALANMDILGTHLYGTQVSQFPYPLFKQKGAGKDLWMTEVYYPNSDTNSADRWPEALDVSQHIHNAMVEGDFQAYVWWYIRRSYGPMKEDGTISKRGYNMAHFSKFVRPGYVRIDATKNPNANVYVSAYKGDNKVVIVAINKSNTGVNQNFVLQNGSASNVSRWITSSSSNLQPGTNLTVSGNHFWAHLPAQSVTTFVVNR</sequence>
<comment type="function">
    <text evidence="3">Catalyzes the depolymerization of methylglucuronoxylan (MeGAXn) from different sources. It cleaves the beta-1,4-xylosidic bond penultimate to that linking carbon one of the xylose residue substituted with alpha-1,2-linked 4-O-methyl-D-glucuronate (MeGA).</text>
</comment>
<comment type="catalytic activity">
    <reaction>
        <text>Endohydrolysis of (1-&gt;4)-beta-D-xylosyl links in some glucuronoarabinoxylans.</text>
        <dbReference type="EC" id="3.2.1.136"/>
    </reaction>
</comment>
<comment type="biophysicochemical properties">
    <kinetics>
        <Vmax evidence="3">59.5 umol/min/mg enzyme with methylglucuronoxylan from sweetgum as substrate (at 37 degrees Celsius and pH 6)</Vmax>
        <text>The Km value for methylglucuronoxylan from sweetgum is 1.63 mg/ml. The activity is directly correlated to the degree of substitution of the glucuronosyl moiety on the xylan chain.</text>
    </kinetics>
    <phDependence>
        <text evidence="3">Optimum pH is 6.</text>
    </phDependence>
    <temperatureDependence>
        <text evidence="3">Optimum temperature is 65 degrees Celsius. Half the activity is retained for 25 hours at 40 degrees Celsius and for 5 hours at 50 degrees Celsius.</text>
    </temperatureDependence>
</comment>
<comment type="pathway">
    <text>Glycan degradation; xylan degradation.</text>
</comment>
<comment type="subcellular location">
    <subcellularLocation>
        <location evidence="2">Secreted</location>
    </subcellularLocation>
</comment>
<comment type="induction">
    <text evidence="3">Constitutively expressed.</text>
</comment>
<comment type="similarity">
    <text evidence="5">Belongs to the glycosyl hydrolase 30 family.</text>
</comment>
<proteinExistence type="evidence at protein level"/>
<organism>
    <name type="scientific">Bacillus subtilis (strain 168)</name>
    <dbReference type="NCBI Taxonomy" id="224308"/>
    <lineage>
        <taxon>Bacteria</taxon>
        <taxon>Bacillati</taxon>
        <taxon>Bacillota</taxon>
        <taxon>Bacilli</taxon>
        <taxon>Bacillales</taxon>
        <taxon>Bacillaceae</taxon>
        <taxon>Bacillus</taxon>
    </lineage>
</organism>
<reference key="1">
    <citation type="journal article" date="1996" name="Microbiology">
        <title>New genes in the 170 degrees region of the Bacillus subtilis genome encode DNA gyrase subunits, a thioredoxin, a xylanase and an amino acid transporter.</title>
        <authorList>
            <person name="Rose M."/>
            <person name="Entian K.-D."/>
        </authorList>
    </citation>
    <scope>NUCLEOTIDE SEQUENCE [GENOMIC DNA]</scope>
    <source>
        <strain>168</strain>
    </source>
</reference>
<reference key="2">
    <citation type="journal article" date="1997" name="Nature">
        <title>The complete genome sequence of the Gram-positive bacterium Bacillus subtilis.</title>
        <authorList>
            <person name="Kunst F."/>
            <person name="Ogasawara N."/>
            <person name="Moszer I."/>
            <person name="Albertini A.M."/>
            <person name="Alloni G."/>
            <person name="Azevedo V."/>
            <person name="Bertero M.G."/>
            <person name="Bessieres P."/>
            <person name="Bolotin A."/>
            <person name="Borchert S."/>
            <person name="Borriss R."/>
            <person name="Boursier L."/>
            <person name="Brans A."/>
            <person name="Braun M."/>
            <person name="Brignell S.C."/>
            <person name="Bron S."/>
            <person name="Brouillet S."/>
            <person name="Bruschi C.V."/>
            <person name="Caldwell B."/>
            <person name="Capuano V."/>
            <person name="Carter N.M."/>
            <person name="Choi S.-K."/>
            <person name="Codani J.-J."/>
            <person name="Connerton I.F."/>
            <person name="Cummings N.J."/>
            <person name="Daniel R.A."/>
            <person name="Denizot F."/>
            <person name="Devine K.M."/>
            <person name="Duesterhoeft A."/>
            <person name="Ehrlich S.D."/>
            <person name="Emmerson P.T."/>
            <person name="Entian K.-D."/>
            <person name="Errington J."/>
            <person name="Fabret C."/>
            <person name="Ferrari E."/>
            <person name="Foulger D."/>
            <person name="Fritz C."/>
            <person name="Fujita M."/>
            <person name="Fujita Y."/>
            <person name="Fuma S."/>
            <person name="Galizzi A."/>
            <person name="Galleron N."/>
            <person name="Ghim S.-Y."/>
            <person name="Glaser P."/>
            <person name="Goffeau A."/>
            <person name="Golightly E.J."/>
            <person name="Grandi G."/>
            <person name="Guiseppi G."/>
            <person name="Guy B.J."/>
            <person name="Haga K."/>
            <person name="Haiech J."/>
            <person name="Harwood C.R."/>
            <person name="Henaut A."/>
            <person name="Hilbert H."/>
            <person name="Holsappel S."/>
            <person name="Hosono S."/>
            <person name="Hullo M.-F."/>
            <person name="Itaya M."/>
            <person name="Jones L.-M."/>
            <person name="Joris B."/>
            <person name="Karamata D."/>
            <person name="Kasahara Y."/>
            <person name="Klaerr-Blanchard M."/>
            <person name="Klein C."/>
            <person name="Kobayashi Y."/>
            <person name="Koetter P."/>
            <person name="Koningstein G."/>
            <person name="Krogh S."/>
            <person name="Kumano M."/>
            <person name="Kurita K."/>
            <person name="Lapidus A."/>
            <person name="Lardinois S."/>
            <person name="Lauber J."/>
            <person name="Lazarevic V."/>
            <person name="Lee S.-M."/>
            <person name="Levine A."/>
            <person name="Liu H."/>
            <person name="Masuda S."/>
            <person name="Mauel C."/>
            <person name="Medigue C."/>
            <person name="Medina N."/>
            <person name="Mellado R.P."/>
            <person name="Mizuno M."/>
            <person name="Moestl D."/>
            <person name="Nakai S."/>
            <person name="Noback M."/>
            <person name="Noone D."/>
            <person name="O'Reilly M."/>
            <person name="Ogawa K."/>
            <person name="Ogiwara A."/>
            <person name="Oudega B."/>
            <person name="Park S.-H."/>
            <person name="Parro V."/>
            <person name="Pohl T.M."/>
            <person name="Portetelle D."/>
            <person name="Porwollik S."/>
            <person name="Prescott A.M."/>
            <person name="Presecan E."/>
            <person name="Pujic P."/>
            <person name="Purnelle B."/>
            <person name="Rapoport G."/>
            <person name="Rey M."/>
            <person name="Reynolds S."/>
            <person name="Rieger M."/>
            <person name="Rivolta C."/>
            <person name="Rocha E."/>
            <person name="Roche B."/>
            <person name="Rose M."/>
            <person name="Sadaie Y."/>
            <person name="Sato T."/>
            <person name="Scanlan E."/>
            <person name="Schleich S."/>
            <person name="Schroeter R."/>
            <person name="Scoffone F."/>
            <person name="Sekiguchi J."/>
            <person name="Sekowska A."/>
            <person name="Seror S.J."/>
            <person name="Serror P."/>
            <person name="Shin B.-S."/>
            <person name="Soldo B."/>
            <person name="Sorokin A."/>
            <person name="Tacconi E."/>
            <person name="Takagi T."/>
            <person name="Takahashi H."/>
            <person name="Takemaru K."/>
            <person name="Takeuchi M."/>
            <person name="Tamakoshi A."/>
            <person name="Tanaka T."/>
            <person name="Terpstra P."/>
            <person name="Tognoni A."/>
            <person name="Tosato V."/>
            <person name="Uchiyama S."/>
            <person name="Vandenbol M."/>
            <person name="Vannier F."/>
            <person name="Vassarotti A."/>
            <person name="Viari A."/>
            <person name="Wambutt R."/>
            <person name="Wedler E."/>
            <person name="Wedler H."/>
            <person name="Weitzenegger T."/>
            <person name="Winters P."/>
            <person name="Wipat A."/>
            <person name="Yamamoto H."/>
            <person name="Yamane K."/>
            <person name="Yasumoto K."/>
            <person name="Yata K."/>
            <person name="Yoshida K."/>
            <person name="Yoshikawa H.-F."/>
            <person name="Zumstein E."/>
            <person name="Yoshikawa H."/>
            <person name="Danchin A."/>
        </authorList>
    </citation>
    <scope>NUCLEOTIDE SEQUENCE [LARGE SCALE GENOMIC DNA]</scope>
    <source>
        <strain>168</strain>
    </source>
</reference>
<reference key="3">
    <citation type="journal article" date="2004" name="Microbiol. Mol. Biol. Rev.">
        <title>Proteomics of protein secretion by Bacillus subtilis: separating the 'secrets' of the secretome.</title>
        <authorList>
            <person name="Tjalsma H."/>
            <person name="Antelmann H."/>
            <person name="Jongbloed J.D.H."/>
            <person name="Braun P.G."/>
            <person name="Darmon E."/>
            <person name="Dorenbos R."/>
            <person name="Dubois J.-Y.F."/>
            <person name="Westers H."/>
            <person name="Zanen G."/>
            <person name="Quax W.J."/>
            <person name="Kuipers O.P."/>
            <person name="Bron S."/>
            <person name="Hecker M."/>
            <person name="van Dijl J.M."/>
        </authorList>
    </citation>
    <scope>SUBCELLULAR LOCATION</scope>
    <source>
        <strain>168</strain>
    </source>
</reference>
<reference key="4">
    <citation type="journal article" date="2006" name="J. Bacteriol.">
        <title>Characterization of xynC from Bacillus subtilis subsp. subtilis strain 168 and analysis of its role in depolymerization of glucuronoxylan.</title>
        <authorList>
            <person name="St John F.J."/>
            <person name="Rice J.D."/>
            <person name="Preston J.F."/>
        </authorList>
    </citation>
    <scope>FUNCTION</scope>
    <scope>INDUCTION</scope>
    <scope>CHARACTERIZATION</scope>
    <scope>BIOPHYSICOCHEMICAL PROPERTIES</scope>
    <source>
        <strain>168</strain>
    </source>
</reference>
<reference key="5">
    <citation type="journal article" date="2009" name="Acta Crystallogr. F">
        <title>Crystallization and crystallographic analysis of Bacillus subtilis xylanase C.</title>
        <authorList>
            <person name="St John F.J."/>
            <person name="Godwin D.K."/>
            <person name="Preston J.F."/>
            <person name="Pozharski E."/>
            <person name="Hurlbert J.C."/>
        </authorList>
    </citation>
    <scope>X-RAY CRYSTALLOGRAPHY (2.68 ANGSTROMS)</scope>
</reference>
<reference key="6">
    <citation type="journal article" date="2011" name="J. Mol. Biol.">
        <title>Ligand bound structures of a glycosyl hydrolase family 30 glucuronoxylan xylanohydrolase.</title>
        <authorList>
            <person name="St John F.J."/>
            <person name="Hurlbert J.C."/>
            <person name="Rice J.D."/>
            <person name="Preston J.F."/>
            <person name="Pozharski E."/>
        </authorList>
    </citation>
    <scope>X-RAY CRYSTALLOGRAPHY (1.64 ANGSTROMS) IN COMPLEX WITH SUBSTRATE</scope>
    <scope>ACTIVE SITE</scope>
</reference>
<keyword id="KW-0002">3D-structure</keyword>
<keyword id="KW-0119">Carbohydrate metabolism</keyword>
<keyword id="KW-0326">Glycosidase</keyword>
<keyword id="KW-0378">Hydrolase</keyword>
<keyword id="KW-0624">Polysaccharide degradation</keyword>
<keyword id="KW-1185">Reference proteome</keyword>
<keyword id="KW-0964">Secreted</keyword>
<keyword id="KW-0732">Signal</keyword>
<keyword id="KW-0858">Xylan degradation</keyword>
<evidence type="ECO:0000255" key="1"/>
<evidence type="ECO:0000269" key="2">
    <source>
    </source>
</evidence>
<evidence type="ECO:0000269" key="3">
    <source>
    </source>
</evidence>
<evidence type="ECO:0000269" key="4">
    <source>
    </source>
</evidence>
<evidence type="ECO:0000305" key="5"/>
<evidence type="ECO:0007829" key="6">
    <source>
        <dbReference type="PDB" id="3KL0"/>
    </source>
</evidence>
<evidence type="ECO:0007829" key="7">
    <source>
        <dbReference type="PDB" id="3KL5"/>
    </source>
</evidence>
<name>XYNC_BACSU</name>
<dbReference type="EC" id="3.2.1.136"/>
<dbReference type="EMBL" id="Z73234">
    <property type="protein sequence ID" value="CAA97612.1"/>
    <property type="molecule type" value="Genomic_DNA"/>
</dbReference>
<dbReference type="EMBL" id="AL009126">
    <property type="protein sequence ID" value="CAB13698.1"/>
    <property type="molecule type" value="Genomic_DNA"/>
</dbReference>
<dbReference type="PIR" id="E69892">
    <property type="entry name" value="E69892"/>
</dbReference>
<dbReference type="RefSeq" id="NP_389697.1">
    <property type="nucleotide sequence ID" value="NC_000964.3"/>
</dbReference>
<dbReference type="RefSeq" id="WP_003231534.1">
    <property type="nucleotide sequence ID" value="NZ_OZ025638.1"/>
</dbReference>
<dbReference type="PDB" id="3GTN">
    <property type="method" value="X-ray"/>
    <property type="resolution" value="2.68 A"/>
    <property type="chains" value="A/B=33-422"/>
</dbReference>
<dbReference type="PDB" id="3KL0">
    <property type="method" value="X-ray"/>
    <property type="resolution" value="1.64 A"/>
    <property type="chains" value="A/B/C/D=33-422"/>
</dbReference>
<dbReference type="PDB" id="3KL3">
    <property type="method" value="X-ray"/>
    <property type="resolution" value="2.33 A"/>
    <property type="chains" value="A/B/C/D=33-422"/>
</dbReference>
<dbReference type="PDB" id="3KL5">
    <property type="method" value="X-ray"/>
    <property type="resolution" value="2.59 A"/>
    <property type="chains" value="A/B/C/D=33-422"/>
</dbReference>
<dbReference type="PDBsum" id="3GTN"/>
<dbReference type="PDBsum" id="3KL0"/>
<dbReference type="PDBsum" id="3KL3"/>
<dbReference type="PDBsum" id="3KL5"/>
<dbReference type="SMR" id="Q45070"/>
<dbReference type="FunCoup" id="Q45070">
    <property type="interactions" value="7"/>
</dbReference>
<dbReference type="STRING" id="224308.BSU18150"/>
<dbReference type="CAZy" id="GH30">
    <property type="family name" value="Glycoside Hydrolase Family 30"/>
</dbReference>
<dbReference type="PaxDb" id="224308-BSU18150"/>
<dbReference type="EnsemblBacteria" id="CAB13698">
    <property type="protein sequence ID" value="CAB13698"/>
    <property type="gene ID" value="BSU_18150"/>
</dbReference>
<dbReference type="GeneID" id="937052"/>
<dbReference type="KEGG" id="bsu:BSU18150"/>
<dbReference type="PATRIC" id="fig|224308.179.peg.1979"/>
<dbReference type="eggNOG" id="COG5520">
    <property type="taxonomic scope" value="Bacteria"/>
</dbReference>
<dbReference type="InParanoid" id="Q45070"/>
<dbReference type="OrthoDB" id="9806701at2"/>
<dbReference type="PhylomeDB" id="Q45070"/>
<dbReference type="BioCyc" id="BSUB:BSU18150-MONOMER"/>
<dbReference type="BioCyc" id="MetaCyc:BSU18150-MONOMER"/>
<dbReference type="BRENDA" id="3.2.1.136">
    <property type="organism ID" value="658"/>
</dbReference>
<dbReference type="SABIO-RK" id="Q45070"/>
<dbReference type="UniPathway" id="UPA00114"/>
<dbReference type="EvolutionaryTrace" id="Q45070"/>
<dbReference type="Proteomes" id="UP000001570">
    <property type="component" value="Chromosome"/>
</dbReference>
<dbReference type="GO" id="GO:0005576">
    <property type="term" value="C:extracellular region"/>
    <property type="evidence" value="ECO:0007669"/>
    <property type="project" value="UniProtKB-SubCell"/>
</dbReference>
<dbReference type="GO" id="GO:0016020">
    <property type="term" value="C:membrane"/>
    <property type="evidence" value="ECO:0007669"/>
    <property type="project" value="GOC"/>
</dbReference>
<dbReference type="GO" id="GO:0004348">
    <property type="term" value="F:glucosylceramidase activity"/>
    <property type="evidence" value="ECO:0007669"/>
    <property type="project" value="InterPro"/>
</dbReference>
<dbReference type="GO" id="GO:0033940">
    <property type="term" value="F:glucuronoarabinoxylan endo-1,4-beta-xylanase activity"/>
    <property type="evidence" value="ECO:0007669"/>
    <property type="project" value="UniProtKB-EC"/>
</dbReference>
<dbReference type="GO" id="GO:0006665">
    <property type="term" value="P:sphingolipid metabolic process"/>
    <property type="evidence" value="ECO:0007669"/>
    <property type="project" value="InterPro"/>
</dbReference>
<dbReference type="GO" id="GO:0045493">
    <property type="term" value="P:xylan catabolic process"/>
    <property type="evidence" value="ECO:0007669"/>
    <property type="project" value="UniProtKB-UniPathway"/>
</dbReference>
<dbReference type="FunFam" id="2.60.40.1180:FF:000068">
    <property type="entry name" value="Glucuronoxylanase XynC"/>
    <property type="match status" value="1"/>
</dbReference>
<dbReference type="FunFam" id="3.20.20.80:FF:000234">
    <property type="entry name" value="Glucuronoxylanase XynC"/>
    <property type="match status" value="1"/>
</dbReference>
<dbReference type="Gene3D" id="3.20.20.80">
    <property type="entry name" value="Glycosidases"/>
    <property type="match status" value="1"/>
</dbReference>
<dbReference type="Gene3D" id="2.60.40.1180">
    <property type="entry name" value="Golgi alpha-mannosidase II"/>
    <property type="match status" value="1"/>
</dbReference>
<dbReference type="InterPro" id="IPR001139">
    <property type="entry name" value="Glyco_hydro_30"/>
</dbReference>
<dbReference type="InterPro" id="IPR013780">
    <property type="entry name" value="Glyco_hydro_b"/>
</dbReference>
<dbReference type="InterPro" id="IPR017853">
    <property type="entry name" value="Glycoside_hydrolase_SF"/>
</dbReference>
<dbReference type="PANTHER" id="PTHR11069">
    <property type="entry name" value="GLUCOSYLCERAMIDASE"/>
    <property type="match status" value="1"/>
</dbReference>
<dbReference type="PANTHER" id="PTHR11069:SF38">
    <property type="entry name" value="GLUCURONOXYLANASE XYNC"/>
    <property type="match status" value="1"/>
</dbReference>
<dbReference type="SUPFAM" id="SSF51445">
    <property type="entry name" value="(Trans)glycosidases"/>
    <property type="match status" value="1"/>
</dbReference>
<dbReference type="SUPFAM" id="SSF51011">
    <property type="entry name" value="Glycosyl hydrolase domain"/>
    <property type="match status" value="1"/>
</dbReference>